<keyword id="KW-0004">4Fe-4S</keyword>
<keyword id="KW-0028">Amino-acid biosynthesis</keyword>
<keyword id="KW-0100">Branched-chain amino acid biosynthesis</keyword>
<keyword id="KW-0408">Iron</keyword>
<keyword id="KW-0411">Iron-sulfur</keyword>
<keyword id="KW-0432">Leucine biosynthesis</keyword>
<keyword id="KW-0456">Lyase</keyword>
<keyword id="KW-0479">Metal-binding</keyword>
<keyword id="KW-1185">Reference proteome</keyword>
<gene>
    <name evidence="1" type="primary">leuC</name>
    <name type="ordered locus">Noca_3298</name>
</gene>
<protein>
    <recommendedName>
        <fullName evidence="1">3-isopropylmalate dehydratase large subunit</fullName>
        <ecNumber evidence="1">4.2.1.33</ecNumber>
    </recommendedName>
    <alternativeName>
        <fullName evidence="1">Alpha-IPM isomerase</fullName>
        <shortName evidence="1">IPMI</shortName>
    </alternativeName>
    <alternativeName>
        <fullName evidence="1">Isopropylmalate isomerase</fullName>
    </alternativeName>
</protein>
<name>LEUC_NOCSJ</name>
<sequence>MGRTLAEKVWDEHVVRSTPGEPDLLYIDLHLIHEVTSPQAFDGLRLAGRTVRRPDLTLATEDHNVPTLDWDKPIADPVSKTQVDTLRRNAAEFGVRLHPLGDVEQGIVHVVGPQLGLTQPGMTIVCGDSHTSTHGAFGAIAFGIGTSEVEHVLATQTLPQAKPKTMAVTVEGSLPDGVTAKDLVLTLIAHTGTGGGQGYIVEYRGPAIEELSMEGRMTVCNMSIEWGAKAGLIAPDQTTFDYIEGRPEAPKGADWDAAVAHWKTLVTDADATFDKEIVLDASTMTPFVTWGTNPGQGVPLGGSVPDPAQYDDPSDRIAAEKACEYMGLEAGTPMRDIKVDTVFIGSCTNGRIEDLRAAAEIIKGRQVDKSTRLLVVPGSVRVRLQAQDEGLDVIFKEAGGEWRGAGCSMCLGMNPDTLQPGERSASTSNRNFEGRQGKGGRTHLVSVPVAAATAIRGTLSSPADLEPVGSN</sequence>
<organism>
    <name type="scientific">Nocardioides sp. (strain ATCC BAA-499 / JS614)</name>
    <dbReference type="NCBI Taxonomy" id="196162"/>
    <lineage>
        <taxon>Bacteria</taxon>
        <taxon>Bacillati</taxon>
        <taxon>Actinomycetota</taxon>
        <taxon>Actinomycetes</taxon>
        <taxon>Propionibacteriales</taxon>
        <taxon>Nocardioidaceae</taxon>
        <taxon>Nocardioides</taxon>
    </lineage>
</organism>
<evidence type="ECO:0000255" key="1">
    <source>
        <dbReference type="HAMAP-Rule" id="MF_01026"/>
    </source>
</evidence>
<evidence type="ECO:0000256" key="2">
    <source>
        <dbReference type="SAM" id="MobiDB-lite"/>
    </source>
</evidence>
<reference key="1">
    <citation type="submission" date="2006-12" db="EMBL/GenBank/DDBJ databases">
        <title>Complete sequence of chromosome 1 of Nocardioides sp. JS614.</title>
        <authorList>
            <person name="Copeland A."/>
            <person name="Lucas S."/>
            <person name="Lapidus A."/>
            <person name="Barry K."/>
            <person name="Detter J.C."/>
            <person name="Glavina del Rio T."/>
            <person name="Hammon N."/>
            <person name="Israni S."/>
            <person name="Dalin E."/>
            <person name="Tice H."/>
            <person name="Pitluck S."/>
            <person name="Thompson L.S."/>
            <person name="Brettin T."/>
            <person name="Bruce D."/>
            <person name="Han C."/>
            <person name="Tapia R."/>
            <person name="Schmutz J."/>
            <person name="Larimer F."/>
            <person name="Land M."/>
            <person name="Hauser L."/>
            <person name="Kyrpides N."/>
            <person name="Kim E."/>
            <person name="Mattes T."/>
            <person name="Gossett J."/>
            <person name="Richardson P."/>
        </authorList>
    </citation>
    <scope>NUCLEOTIDE SEQUENCE [LARGE SCALE GENOMIC DNA]</scope>
    <source>
        <strain>ATCC BAA-499 / JS614</strain>
    </source>
</reference>
<feature type="chain" id="PRO_1000063577" description="3-isopropylmalate dehydratase large subunit">
    <location>
        <begin position="1"/>
        <end position="471"/>
    </location>
</feature>
<feature type="region of interest" description="Disordered" evidence="2">
    <location>
        <begin position="417"/>
        <end position="443"/>
    </location>
</feature>
<feature type="binding site" evidence="1">
    <location>
        <position position="347"/>
    </location>
    <ligand>
        <name>[4Fe-4S] cluster</name>
        <dbReference type="ChEBI" id="CHEBI:49883"/>
    </ligand>
</feature>
<feature type="binding site" evidence="1">
    <location>
        <position position="407"/>
    </location>
    <ligand>
        <name>[4Fe-4S] cluster</name>
        <dbReference type="ChEBI" id="CHEBI:49883"/>
    </ligand>
</feature>
<feature type="binding site" evidence="1">
    <location>
        <position position="410"/>
    </location>
    <ligand>
        <name>[4Fe-4S] cluster</name>
        <dbReference type="ChEBI" id="CHEBI:49883"/>
    </ligand>
</feature>
<proteinExistence type="inferred from homology"/>
<accession>A1SLW5</accession>
<dbReference type="EC" id="4.2.1.33" evidence="1"/>
<dbReference type="EMBL" id="CP000509">
    <property type="protein sequence ID" value="ABL82800.1"/>
    <property type="molecule type" value="Genomic_DNA"/>
</dbReference>
<dbReference type="RefSeq" id="WP_011756734.1">
    <property type="nucleotide sequence ID" value="NC_008699.1"/>
</dbReference>
<dbReference type="SMR" id="A1SLW5"/>
<dbReference type="STRING" id="196162.Noca_3298"/>
<dbReference type="KEGG" id="nca:Noca_3298"/>
<dbReference type="eggNOG" id="COG0065">
    <property type="taxonomic scope" value="Bacteria"/>
</dbReference>
<dbReference type="HOGENOM" id="CLU_006714_3_4_11"/>
<dbReference type="OrthoDB" id="9802769at2"/>
<dbReference type="UniPathway" id="UPA00048">
    <property type="reaction ID" value="UER00071"/>
</dbReference>
<dbReference type="Proteomes" id="UP000000640">
    <property type="component" value="Chromosome"/>
</dbReference>
<dbReference type="GO" id="GO:0003861">
    <property type="term" value="F:3-isopropylmalate dehydratase activity"/>
    <property type="evidence" value="ECO:0007669"/>
    <property type="project" value="UniProtKB-UniRule"/>
</dbReference>
<dbReference type="GO" id="GO:0051539">
    <property type="term" value="F:4 iron, 4 sulfur cluster binding"/>
    <property type="evidence" value="ECO:0007669"/>
    <property type="project" value="UniProtKB-KW"/>
</dbReference>
<dbReference type="GO" id="GO:0046872">
    <property type="term" value="F:metal ion binding"/>
    <property type="evidence" value="ECO:0007669"/>
    <property type="project" value="UniProtKB-KW"/>
</dbReference>
<dbReference type="GO" id="GO:0009098">
    <property type="term" value="P:L-leucine biosynthetic process"/>
    <property type="evidence" value="ECO:0007669"/>
    <property type="project" value="UniProtKB-UniRule"/>
</dbReference>
<dbReference type="CDD" id="cd01583">
    <property type="entry name" value="IPMI"/>
    <property type="match status" value="1"/>
</dbReference>
<dbReference type="FunFam" id="3.30.499.10:FF:000007">
    <property type="entry name" value="3-isopropylmalate dehydratase large subunit"/>
    <property type="match status" value="1"/>
</dbReference>
<dbReference type="Gene3D" id="3.30.499.10">
    <property type="entry name" value="Aconitase, domain 3"/>
    <property type="match status" value="2"/>
</dbReference>
<dbReference type="HAMAP" id="MF_01026">
    <property type="entry name" value="LeuC_type1"/>
    <property type="match status" value="1"/>
</dbReference>
<dbReference type="InterPro" id="IPR004430">
    <property type="entry name" value="3-IsopropMal_deHydase_lsu"/>
</dbReference>
<dbReference type="InterPro" id="IPR015931">
    <property type="entry name" value="Acnase/IPM_dHydase_lsu_aba_1/3"/>
</dbReference>
<dbReference type="InterPro" id="IPR001030">
    <property type="entry name" value="Acoase/IPM_deHydtase_lsu_aba"/>
</dbReference>
<dbReference type="InterPro" id="IPR018136">
    <property type="entry name" value="Aconitase_4Fe-4S_BS"/>
</dbReference>
<dbReference type="InterPro" id="IPR036008">
    <property type="entry name" value="Aconitase_4Fe-4S_dom"/>
</dbReference>
<dbReference type="InterPro" id="IPR050067">
    <property type="entry name" value="IPM_dehydratase_rel_enz"/>
</dbReference>
<dbReference type="InterPro" id="IPR033941">
    <property type="entry name" value="IPMI_cat"/>
</dbReference>
<dbReference type="NCBIfam" id="TIGR00170">
    <property type="entry name" value="leuC"/>
    <property type="match status" value="1"/>
</dbReference>
<dbReference type="NCBIfam" id="NF004016">
    <property type="entry name" value="PRK05478.1"/>
    <property type="match status" value="1"/>
</dbReference>
<dbReference type="NCBIfam" id="NF009116">
    <property type="entry name" value="PRK12466.1"/>
    <property type="match status" value="1"/>
</dbReference>
<dbReference type="PANTHER" id="PTHR43822:SF9">
    <property type="entry name" value="3-ISOPROPYLMALATE DEHYDRATASE"/>
    <property type="match status" value="1"/>
</dbReference>
<dbReference type="PANTHER" id="PTHR43822">
    <property type="entry name" value="HOMOACONITASE, MITOCHONDRIAL-RELATED"/>
    <property type="match status" value="1"/>
</dbReference>
<dbReference type="Pfam" id="PF00330">
    <property type="entry name" value="Aconitase"/>
    <property type="match status" value="1"/>
</dbReference>
<dbReference type="PRINTS" id="PR00415">
    <property type="entry name" value="ACONITASE"/>
</dbReference>
<dbReference type="SUPFAM" id="SSF53732">
    <property type="entry name" value="Aconitase iron-sulfur domain"/>
    <property type="match status" value="1"/>
</dbReference>
<dbReference type="PROSITE" id="PS00450">
    <property type="entry name" value="ACONITASE_1"/>
    <property type="match status" value="1"/>
</dbReference>
<dbReference type="PROSITE" id="PS01244">
    <property type="entry name" value="ACONITASE_2"/>
    <property type="match status" value="1"/>
</dbReference>
<comment type="function">
    <text evidence="1">Catalyzes the isomerization between 2-isopropylmalate and 3-isopropylmalate, via the formation of 2-isopropylmaleate.</text>
</comment>
<comment type="catalytic activity">
    <reaction evidence="1">
        <text>(2R,3S)-3-isopropylmalate = (2S)-2-isopropylmalate</text>
        <dbReference type="Rhea" id="RHEA:32287"/>
        <dbReference type="ChEBI" id="CHEBI:1178"/>
        <dbReference type="ChEBI" id="CHEBI:35121"/>
        <dbReference type="EC" id="4.2.1.33"/>
    </reaction>
</comment>
<comment type="cofactor">
    <cofactor evidence="1">
        <name>[4Fe-4S] cluster</name>
        <dbReference type="ChEBI" id="CHEBI:49883"/>
    </cofactor>
    <text evidence="1">Binds 1 [4Fe-4S] cluster per subunit.</text>
</comment>
<comment type="pathway">
    <text evidence="1">Amino-acid biosynthesis; L-leucine biosynthesis; L-leucine from 3-methyl-2-oxobutanoate: step 2/4.</text>
</comment>
<comment type="subunit">
    <text evidence="1">Heterodimer of LeuC and LeuD.</text>
</comment>
<comment type="similarity">
    <text evidence="1">Belongs to the aconitase/IPM isomerase family. LeuC type 1 subfamily.</text>
</comment>